<keyword id="KW-0002">3D-structure</keyword>
<keyword id="KW-0998">Cell outer membrane</keyword>
<keyword id="KW-0449">Lipoprotein</keyword>
<keyword id="KW-0472">Membrane</keyword>
<keyword id="KW-0564">Palmitate</keyword>
<keyword id="KW-0653">Protein transport</keyword>
<keyword id="KW-0732">Signal</keyword>
<keyword id="KW-0813">Transport</keyword>
<reference key="1">
    <citation type="journal article" date="1989" name="J. Bacteriol.">
        <title>Klebsiella pneumoniae pulS gene encodes an outer membrane lipoprotein required for pullulanase secretion.</title>
        <authorList>
            <person name="D'Enfert C."/>
            <person name="Pugsley A.P."/>
        </authorList>
    </citation>
    <scope>NUCLEOTIDE SEQUENCE [GENOMIC DNA]</scope>
</reference>
<comment type="function">
    <text>Involved in the secretion of pullulanase.</text>
</comment>
<comment type="subcellular location">
    <subcellularLocation>
        <location>Cell outer membrane</location>
        <topology>Lipid-anchor</topology>
    </subcellularLocation>
</comment>
<comment type="similarity">
    <text evidence="1">To E.chrysanthemi OutS.</text>
</comment>
<evidence type="ECO:0000305" key="1"/>
<proteinExistence type="evidence at protein level"/>
<gene>
    <name type="primary">pulS</name>
</gene>
<protein>
    <recommendedName>
        <fullName>Pullulanase secretion protein PulS</fullName>
    </recommendedName>
</protein>
<sequence>MRNFILFPMMAVVLLSGCQQNRPTTLSPAVSGQAQLEQLASVAAGARYLKNKCNRSDLPADEAINRAAINVGKKRGWANIDANLLSQRSAQLYQQLQQDSTPEATKCSQFNRQLAPFIDSLRDNK</sequence>
<accession>P20440</accession>
<name>PULS_KLEPN</name>
<dbReference type="EMBL" id="M29097">
    <property type="protein sequence ID" value="AAA61978.1"/>
    <property type="molecule type" value="Genomic_DNA"/>
</dbReference>
<dbReference type="PIR" id="C32880">
    <property type="entry name" value="C32880"/>
</dbReference>
<dbReference type="PDB" id="4A56">
    <property type="method" value="X-ray"/>
    <property type="resolution" value="1.24 A"/>
    <property type="chains" value="A=30-122"/>
</dbReference>
<dbReference type="PDBsum" id="4A56"/>
<dbReference type="SMR" id="P20440"/>
<dbReference type="TCDB" id="8.A.2.1.1">
    <property type="family name" value="the secretin auxiliary lipoprotein (sal) family"/>
</dbReference>
<dbReference type="GO" id="GO:0009279">
    <property type="term" value="C:cell outer membrane"/>
    <property type="evidence" value="ECO:0007669"/>
    <property type="project" value="UniProtKB-SubCell"/>
</dbReference>
<dbReference type="GO" id="GO:0006886">
    <property type="term" value="P:intracellular protein transport"/>
    <property type="evidence" value="ECO:0007669"/>
    <property type="project" value="InterPro"/>
</dbReference>
<dbReference type="Gene3D" id="1.20.58.1630">
    <property type="entry name" value="Chaperone lipoprotein PulS/OutS"/>
    <property type="match status" value="1"/>
</dbReference>
<dbReference type="InterPro" id="IPR005699">
    <property type="entry name" value="Chap_lipoprot_PulS/OutS"/>
</dbReference>
<dbReference type="InterPro" id="IPR019114">
    <property type="entry name" value="Chap_lipoprot_PulS/OutS-like"/>
</dbReference>
<dbReference type="InterPro" id="IPR038432">
    <property type="entry name" value="PulS/OutS-like_sf"/>
</dbReference>
<dbReference type="NCBIfam" id="TIGR01004">
    <property type="entry name" value="PulS_OutS"/>
    <property type="match status" value="1"/>
</dbReference>
<dbReference type="Pfam" id="PF09691">
    <property type="entry name" value="T2SS_PulS_OutS"/>
    <property type="match status" value="1"/>
</dbReference>
<dbReference type="PROSITE" id="PS51257">
    <property type="entry name" value="PROKAR_LIPOPROTEIN"/>
    <property type="match status" value="1"/>
</dbReference>
<organism>
    <name type="scientific">Klebsiella pneumoniae</name>
    <dbReference type="NCBI Taxonomy" id="573"/>
    <lineage>
        <taxon>Bacteria</taxon>
        <taxon>Pseudomonadati</taxon>
        <taxon>Pseudomonadota</taxon>
        <taxon>Gammaproteobacteria</taxon>
        <taxon>Enterobacterales</taxon>
        <taxon>Enterobacteriaceae</taxon>
        <taxon>Klebsiella/Raoultella group</taxon>
        <taxon>Klebsiella</taxon>
        <taxon>Klebsiella pneumoniae complex</taxon>
    </lineage>
</organism>
<feature type="signal peptide" evidence="1">
    <location>
        <begin position="1"/>
        <end position="17"/>
    </location>
</feature>
<feature type="chain" id="PRO_0000018183" description="Pullulanase secretion protein PulS">
    <location>
        <begin position="18"/>
        <end position="125"/>
    </location>
</feature>
<feature type="lipid moiety-binding region" description="N-palmitoyl cysteine" evidence="1">
    <location>
        <position position="18"/>
    </location>
</feature>
<feature type="lipid moiety-binding region" description="S-diacylglycerol cysteine" evidence="1">
    <location>
        <position position="18"/>
    </location>
</feature>